<name>AMPP3_PODAN</name>
<keyword id="KW-0031">Aminopeptidase</keyword>
<keyword id="KW-0378">Hydrolase</keyword>
<keyword id="KW-0464">Manganese</keyword>
<keyword id="KW-0479">Metal-binding</keyword>
<keyword id="KW-0482">Metalloprotease</keyword>
<keyword id="KW-0645">Protease</keyword>
<keyword id="KW-1185">Reference proteome</keyword>
<organism>
    <name type="scientific">Podospora anserina (strain S / ATCC MYA-4624 / DSM 980 / FGSC 10383)</name>
    <name type="common">Pleurage anserina</name>
    <dbReference type="NCBI Taxonomy" id="515849"/>
    <lineage>
        <taxon>Eukaryota</taxon>
        <taxon>Fungi</taxon>
        <taxon>Dikarya</taxon>
        <taxon>Ascomycota</taxon>
        <taxon>Pezizomycotina</taxon>
        <taxon>Sordariomycetes</taxon>
        <taxon>Sordariomycetidae</taxon>
        <taxon>Sordariales</taxon>
        <taxon>Podosporaceae</taxon>
        <taxon>Podospora</taxon>
        <taxon>Podospora anserina</taxon>
    </lineage>
</organism>
<protein>
    <recommendedName>
        <fullName>Probable Xaa-Pro aminopeptidase PEPP</fullName>
        <ecNumber>3.4.11.9</ecNumber>
    </recommendedName>
    <alternativeName>
        <fullName>Aminoacylproline aminopeptidase</fullName>
    </alternativeName>
    <alternativeName>
        <fullName>Prolidase</fullName>
    </alternativeName>
</protein>
<accession>B2AFW1</accession>
<accession>A0A090DAM6</accession>
<sequence length="460" mass="51598">MDYNKILQGKYPAKQHAKRVSDYIRDKIPNATGVLYLEGRATKMIEDNDSEEHFRQRRYFYYLTGCPLADSYVIHDMDSSKTTLFIPPVDPESVIWSGLPVSAEEALSNWDVDEVKYTNEINATLAHVGASKANATLYAIPNQVSEKVTFLEFDHKNFSILKEAIEVTRVVKDEYEIAMIGKANQISSRAHELVMKKVKHVKNERELEAVFLAECISNGARDQAYHSIVAAGRAAATLHYVANNAPLDGKLNLLLDAGGEWNCYASDITRTFPINGKFTTESRAIYDIVLKMQLECIATLKEGVVWDDVHTLAHKIAIDGLLELGILKGDKEAILESRTSVAFFPHGLGHYLGMDTHDTGGNANYADKDTMFRYLRVRGTLPAGSVITVEPGLYFCNFIIEPFLNDPKHSQYINRPVLDRYWDVGGVRIEDNIVITKRGTQNLTTAVKDPDEMERLIASS</sequence>
<evidence type="ECO:0000250" key="1"/>
<evidence type="ECO:0000305" key="2"/>
<feature type="chain" id="PRO_0000411885" description="Probable Xaa-Pro aminopeptidase PEPP">
    <location>
        <begin position="1"/>
        <end position="460"/>
    </location>
</feature>
<feature type="binding site" evidence="1">
    <location>
        <position position="256"/>
    </location>
    <ligand>
        <name>Mn(2+)</name>
        <dbReference type="ChEBI" id="CHEBI:29035"/>
        <label>2</label>
    </ligand>
</feature>
<feature type="binding site" evidence="1">
    <location>
        <position position="267"/>
    </location>
    <ligand>
        <name>Mn(2+)</name>
        <dbReference type="ChEBI" id="CHEBI:29035"/>
        <label>1</label>
    </ligand>
</feature>
<feature type="binding site" evidence="1">
    <location>
        <position position="267"/>
    </location>
    <ligand>
        <name>Mn(2+)</name>
        <dbReference type="ChEBI" id="CHEBI:29035"/>
        <label>2</label>
    </ligand>
</feature>
<feature type="binding site" evidence="1">
    <location>
        <position position="390"/>
    </location>
    <ligand>
        <name>Mn(2+)</name>
        <dbReference type="ChEBI" id="CHEBI:29035"/>
        <label>1</label>
    </ligand>
</feature>
<feature type="binding site" evidence="1">
    <location>
        <position position="430"/>
    </location>
    <ligand>
        <name>Mn(2+)</name>
        <dbReference type="ChEBI" id="CHEBI:29035"/>
        <label>1</label>
    </ligand>
</feature>
<feature type="binding site" evidence="1">
    <location>
        <position position="430"/>
    </location>
    <ligand>
        <name>Mn(2+)</name>
        <dbReference type="ChEBI" id="CHEBI:29035"/>
        <label>2</label>
    </ligand>
</feature>
<proteinExistence type="inferred from homology"/>
<reference key="1">
    <citation type="journal article" date="2008" name="Genome Biol.">
        <title>The genome sequence of the model ascomycete fungus Podospora anserina.</title>
        <authorList>
            <person name="Espagne E."/>
            <person name="Lespinet O."/>
            <person name="Malagnac F."/>
            <person name="Da Silva C."/>
            <person name="Jaillon O."/>
            <person name="Porcel B.M."/>
            <person name="Couloux A."/>
            <person name="Aury J.-M."/>
            <person name="Segurens B."/>
            <person name="Poulain J."/>
            <person name="Anthouard V."/>
            <person name="Grossetete S."/>
            <person name="Khalili H."/>
            <person name="Coppin E."/>
            <person name="Dequard-Chablat M."/>
            <person name="Picard M."/>
            <person name="Contamine V."/>
            <person name="Arnaise S."/>
            <person name="Bourdais A."/>
            <person name="Berteaux-Lecellier V."/>
            <person name="Gautheret D."/>
            <person name="de Vries R.P."/>
            <person name="Battaglia E."/>
            <person name="Coutinho P.M."/>
            <person name="Danchin E.G.J."/>
            <person name="Henrissat B."/>
            <person name="El Khoury R."/>
            <person name="Sainsard-Chanet A."/>
            <person name="Boivin A."/>
            <person name="Pinan-Lucarre B."/>
            <person name="Sellem C.H."/>
            <person name="Debuchy R."/>
            <person name="Wincker P."/>
            <person name="Weissenbach J."/>
            <person name="Silar P."/>
        </authorList>
    </citation>
    <scope>NUCLEOTIDE SEQUENCE [LARGE SCALE GENOMIC DNA]</scope>
    <source>
        <strain>S / ATCC MYA-4624 / DSM 980 / FGSC 10383</strain>
    </source>
</reference>
<reference key="2">
    <citation type="journal article" date="2014" name="Genetics">
        <title>Maintaining two mating types: Structure of the mating type locus and its role in heterokaryosis in Podospora anserina.</title>
        <authorList>
            <person name="Grognet P."/>
            <person name="Bidard F."/>
            <person name="Kuchly C."/>
            <person name="Tong L.C.H."/>
            <person name="Coppin E."/>
            <person name="Benkhali J.A."/>
            <person name="Couloux A."/>
            <person name="Wincker P."/>
            <person name="Debuchy R."/>
            <person name="Silar P."/>
        </authorList>
    </citation>
    <scope>GENOME REANNOTATION</scope>
    <source>
        <strain>S / ATCC MYA-4624 / DSM 980 / FGSC 10383</strain>
    </source>
</reference>
<comment type="function">
    <text evidence="1">Catalyzes the removal of a penultimate prolyl residue from the N-termini of peptides.</text>
</comment>
<comment type="catalytic activity">
    <reaction>
        <text>Release of any N-terminal amino acid, including proline, that is linked to proline, even from a dipeptide or tripeptide.</text>
        <dbReference type="EC" id="3.4.11.9"/>
    </reaction>
</comment>
<comment type="cofactor">
    <cofactor evidence="1">
        <name>Mn(2+)</name>
        <dbReference type="ChEBI" id="CHEBI:29035"/>
    </cofactor>
    <text evidence="1">Binds 2 manganese ions per subunit.</text>
</comment>
<comment type="similarity">
    <text evidence="2">Belongs to the peptidase M24B family.</text>
</comment>
<gene>
    <name type="primary">PEPP</name>
    <name type="ordered locus">Pa_0_1330</name>
    <name type="ORF">PODANS_0_1330</name>
</gene>
<dbReference type="EC" id="3.4.11.9"/>
<dbReference type="EMBL" id="CU633464">
    <property type="protein sequence ID" value="CAP62332.1"/>
    <property type="molecule type" value="Genomic_DNA"/>
</dbReference>
<dbReference type="EMBL" id="FO904942">
    <property type="protein sequence ID" value="CDP31638.1"/>
    <property type="molecule type" value="Genomic_DNA"/>
</dbReference>
<dbReference type="RefSeq" id="XP_001904550.1">
    <property type="nucleotide sequence ID" value="XM_001904515.1"/>
</dbReference>
<dbReference type="SMR" id="B2AFW1"/>
<dbReference type="FunCoup" id="B2AFW1">
    <property type="interactions" value="396"/>
</dbReference>
<dbReference type="STRING" id="515849.B2AFW1"/>
<dbReference type="GeneID" id="6188706"/>
<dbReference type="KEGG" id="pan:PODANSg1572"/>
<dbReference type="VEuPathDB" id="FungiDB:PODANS_0_1330"/>
<dbReference type="eggNOG" id="KOG2737">
    <property type="taxonomic scope" value="Eukaryota"/>
</dbReference>
<dbReference type="HOGENOM" id="CLU_017266_1_2_1"/>
<dbReference type="InParanoid" id="B2AFW1"/>
<dbReference type="OrthoDB" id="10261878at2759"/>
<dbReference type="Proteomes" id="UP000001197">
    <property type="component" value="Chromosome 7"/>
</dbReference>
<dbReference type="GO" id="GO:0030145">
    <property type="term" value="F:manganese ion binding"/>
    <property type="evidence" value="ECO:0007669"/>
    <property type="project" value="InterPro"/>
</dbReference>
<dbReference type="GO" id="GO:0070006">
    <property type="term" value="F:metalloaminopeptidase activity"/>
    <property type="evidence" value="ECO:0007669"/>
    <property type="project" value="InterPro"/>
</dbReference>
<dbReference type="GO" id="GO:0006508">
    <property type="term" value="P:proteolysis"/>
    <property type="evidence" value="ECO:0007669"/>
    <property type="project" value="UniProtKB-KW"/>
</dbReference>
<dbReference type="CDD" id="cd01087">
    <property type="entry name" value="Prolidase"/>
    <property type="match status" value="1"/>
</dbReference>
<dbReference type="FunFam" id="3.90.230.10:FF:000002">
    <property type="entry name" value="Xaa-Pro aminopeptidase 3"/>
    <property type="match status" value="1"/>
</dbReference>
<dbReference type="Gene3D" id="3.90.230.10">
    <property type="entry name" value="Creatinase/methionine aminopeptidase superfamily"/>
    <property type="match status" value="1"/>
</dbReference>
<dbReference type="Gene3D" id="3.40.350.10">
    <property type="entry name" value="Creatinase/prolidase N-terminal domain"/>
    <property type="match status" value="1"/>
</dbReference>
<dbReference type="InterPro" id="IPR007865">
    <property type="entry name" value="Aminopep_P_N"/>
</dbReference>
<dbReference type="InterPro" id="IPR029149">
    <property type="entry name" value="Creatin/AminoP/Spt16_N"/>
</dbReference>
<dbReference type="InterPro" id="IPR036005">
    <property type="entry name" value="Creatinase/aminopeptidase-like"/>
</dbReference>
<dbReference type="InterPro" id="IPR000994">
    <property type="entry name" value="Pept_M24"/>
</dbReference>
<dbReference type="InterPro" id="IPR052433">
    <property type="entry name" value="X-Pro_dipept-like"/>
</dbReference>
<dbReference type="PANTHER" id="PTHR43226">
    <property type="entry name" value="XAA-PRO AMINOPEPTIDASE 3"/>
    <property type="match status" value="1"/>
</dbReference>
<dbReference type="PANTHER" id="PTHR43226:SF1">
    <property type="entry name" value="XAA-PRO DIPEPTIDASE"/>
    <property type="match status" value="1"/>
</dbReference>
<dbReference type="Pfam" id="PF05195">
    <property type="entry name" value="AMP_N"/>
    <property type="match status" value="1"/>
</dbReference>
<dbReference type="Pfam" id="PF00557">
    <property type="entry name" value="Peptidase_M24"/>
    <property type="match status" value="1"/>
</dbReference>
<dbReference type="SMART" id="SM01011">
    <property type="entry name" value="AMP_N"/>
    <property type="match status" value="1"/>
</dbReference>
<dbReference type="SUPFAM" id="SSF55920">
    <property type="entry name" value="Creatinase/aminopeptidase"/>
    <property type="match status" value="1"/>
</dbReference>
<dbReference type="SUPFAM" id="SSF53092">
    <property type="entry name" value="Creatinase/prolidase N-terminal domain"/>
    <property type="match status" value="1"/>
</dbReference>